<reference key="1">
    <citation type="submission" date="2005-06" db="EMBL/GenBank/DDBJ databases">
        <authorList>
            <consortium name="NIH - Xenopus Gene Collection (XGC) project"/>
        </authorList>
    </citation>
    <scope>NUCLEOTIDE SEQUENCE [LARGE SCALE MRNA]</scope>
    <source>
        <tissue>Embryo</tissue>
    </source>
</reference>
<name>AP4AT_XENLA</name>
<dbReference type="EMBL" id="BC097570">
    <property type="protein sequence ID" value="AAH97570.1"/>
    <property type="status" value="ALT_INIT"/>
    <property type="molecule type" value="mRNA"/>
</dbReference>
<dbReference type="SMR" id="Q4V832"/>
<dbReference type="AGR" id="Xenbase:XB-GENE-994012"/>
<dbReference type="Xenbase" id="XB-GENE-994012">
    <property type="gene designation" value="tepsin.S"/>
</dbReference>
<dbReference type="Proteomes" id="UP000186698">
    <property type="component" value="Unplaced"/>
</dbReference>
<dbReference type="GO" id="GO:0030662">
    <property type="term" value="C:coated vesicle membrane"/>
    <property type="evidence" value="ECO:0000250"/>
    <property type="project" value="UniProtKB"/>
</dbReference>
<dbReference type="GO" id="GO:0005829">
    <property type="term" value="C:cytosol"/>
    <property type="evidence" value="ECO:0007669"/>
    <property type="project" value="UniProtKB-SubCell"/>
</dbReference>
<dbReference type="GO" id="GO:0032588">
    <property type="term" value="C:trans-Golgi network membrane"/>
    <property type="evidence" value="ECO:0000318"/>
    <property type="project" value="GO_Central"/>
</dbReference>
<dbReference type="GO" id="GO:0044877">
    <property type="term" value="F:protein-containing complex binding"/>
    <property type="evidence" value="ECO:0000250"/>
    <property type="project" value="UniProtKB"/>
</dbReference>
<dbReference type="CDD" id="cd03572">
    <property type="entry name" value="ENTH_like_Tepsin"/>
    <property type="match status" value="1"/>
</dbReference>
<dbReference type="FunFam" id="1.25.40.90:FF:000029">
    <property type="entry name" value="AP-4 complex accessory subunit Tepsin"/>
    <property type="match status" value="1"/>
</dbReference>
<dbReference type="Gene3D" id="1.25.40.90">
    <property type="match status" value="1"/>
</dbReference>
<dbReference type="InterPro" id="IPR013809">
    <property type="entry name" value="ENTH"/>
</dbReference>
<dbReference type="InterPro" id="IPR035802">
    <property type="entry name" value="ENTH/VHS_tepsin"/>
</dbReference>
<dbReference type="InterPro" id="IPR008942">
    <property type="entry name" value="ENTH_VHS"/>
</dbReference>
<dbReference type="InterPro" id="IPR039273">
    <property type="entry name" value="TEPSIN"/>
</dbReference>
<dbReference type="PANTHER" id="PTHR21514">
    <property type="entry name" value="AP-4 COMPLEX ACCESSORY SUBUNIT TEPSIN"/>
    <property type="match status" value="1"/>
</dbReference>
<dbReference type="PANTHER" id="PTHR21514:SF0">
    <property type="entry name" value="AP-4 COMPLEX ACCESSORY SUBUNIT TEPSIN"/>
    <property type="match status" value="1"/>
</dbReference>
<dbReference type="Pfam" id="PF01417">
    <property type="entry name" value="ENTH"/>
    <property type="match status" value="1"/>
</dbReference>
<dbReference type="SUPFAM" id="SSF48464">
    <property type="entry name" value="ENTH/VHS domain"/>
    <property type="match status" value="1"/>
</dbReference>
<keyword id="KW-0963">Cytoplasm</keyword>
<keyword id="KW-0968">Cytoplasmic vesicle</keyword>
<keyword id="KW-0333">Golgi apparatus</keyword>
<keyword id="KW-0472">Membrane</keyword>
<keyword id="KW-1185">Reference proteome</keyword>
<sequence>MLDRLAFLQQLPLLLKGTSDDDTPCPGYLYEEFAKISYESVGSCQCLLEYLLNRLQTSSCHVKLKVLKILLSLCFHGSPQFIQDLRRNSAYIQEAAAVSGPPDPLHGISLYQKVRVTAQEIVGNLFSESIPSPSHTVSAKERSQSGMGSQASSAPALHGFGYSQEEKNLGNSKDTFLNGIQRAAVAVTHSVLPGAGLSHTHACERADDAYKPVAIPSTDRRPLPGNSLPTSAHRGCHRSGVPGGGWDESDSGNSSQESPHDKSPLSRSSDVGSKSGSDGQSRNSQRESLDITDRVEFTHLSDCQQEARLVQEVTWGKRVFLTQEESQQFVRGCSLLNCEVVFEMLNCSLTDDSNCIKLRSMCAISSLMASDLLSHEHMLAVVRQNLQTLTGGPPGPVKDKATKILRQFQALTQNFSERGAVHHETSPSPTTHCSLDLFADVIPHSVVSGLLTSLSVPSSPTLNVQNTVCSLPNGAANQKNPNGSTEKSDPAEELRVETGDHISTNIHVSLFEGMELVGTMKCSHKEDTIGYRAGGLSVEPAKEEPSKPTLSSVFSFLNT</sequence>
<organism>
    <name type="scientific">Xenopus laevis</name>
    <name type="common">African clawed frog</name>
    <dbReference type="NCBI Taxonomy" id="8355"/>
    <lineage>
        <taxon>Eukaryota</taxon>
        <taxon>Metazoa</taxon>
        <taxon>Chordata</taxon>
        <taxon>Craniata</taxon>
        <taxon>Vertebrata</taxon>
        <taxon>Euteleostomi</taxon>
        <taxon>Amphibia</taxon>
        <taxon>Batrachia</taxon>
        <taxon>Anura</taxon>
        <taxon>Pipoidea</taxon>
        <taxon>Pipidae</taxon>
        <taxon>Xenopodinae</taxon>
        <taxon>Xenopus</taxon>
        <taxon>Xenopus</taxon>
    </lineage>
</organism>
<accession>Q4V832</accession>
<proteinExistence type="evidence at transcript level"/>
<gene>
    <name evidence="1" type="primary">tepsin</name>
</gene>
<feature type="chain" id="PRO_0000286680" description="AP-4 complex accessory subunit tepsin">
    <location>
        <begin position="1"/>
        <end position="559"/>
    </location>
</feature>
<feature type="domain" description="ENTH">
    <location>
        <begin position="2"/>
        <end position="135"/>
    </location>
</feature>
<feature type="region of interest" description="Disordered" evidence="2">
    <location>
        <begin position="131"/>
        <end position="157"/>
    </location>
</feature>
<feature type="region of interest" description="Disordered" evidence="2">
    <location>
        <begin position="214"/>
        <end position="290"/>
    </location>
</feature>
<feature type="region of interest" description="Disordered" evidence="2">
    <location>
        <begin position="472"/>
        <end position="491"/>
    </location>
</feature>
<feature type="compositionally biased region" description="Low complexity" evidence="2">
    <location>
        <begin position="144"/>
        <end position="154"/>
    </location>
</feature>
<feature type="compositionally biased region" description="Low complexity" evidence="2">
    <location>
        <begin position="266"/>
        <end position="281"/>
    </location>
</feature>
<feature type="compositionally biased region" description="Polar residues" evidence="2">
    <location>
        <begin position="472"/>
        <end position="485"/>
    </location>
</feature>
<comment type="function">
    <text evidence="1">May play a role in vesicular trafficking of proteins at the trans-Golgi network.</text>
</comment>
<comment type="subcellular location">
    <subcellularLocation>
        <location evidence="1">Golgi apparatus</location>
        <location evidence="1">trans-Golgi network membrane</location>
        <topology evidence="1">Peripheral membrane protein</topology>
    </subcellularLocation>
    <subcellularLocation>
        <location evidence="1">Cytoplasmic vesicle</location>
    </subcellularLocation>
    <subcellularLocation>
        <location evidence="1">Cytoplasm</location>
        <location evidence="1">Cytosol</location>
    </subcellularLocation>
</comment>
<comment type="sequence caution" evidence="3">
    <conflict type="erroneous initiation">
        <sequence resource="EMBL-CDS" id="AAH97570"/>
    </conflict>
    <text>Extended N-terminus.</text>
</comment>
<protein>
    <recommendedName>
        <fullName evidence="3">AP-4 complex accessory subunit tepsin</fullName>
    </recommendedName>
    <alternativeName>
        <fullName evidence="1">Tetra-epsin</fullName>
    </alternativeName>
</protein>
<evidence type="ECO:0000250" key="1">
    <source>
        <dbReference type="UniProtKB" id="Q96N21"/>
    </source>
</evidence>
<evidence type="ECO:0000256" key="2">
    <source>
        <dbReference type="SAM" id="MobiDB-lite"/>
    </source>
</evidence>
<evidence type="ECO:0000305" key="3"/>